<accession>Q04IB3</accession>
<gene>
    <name evidence="1" type="primary">tgt</name>
    <name type="ordered locus">SPD_1868</name>
</gene>
<proteinExistence type="inferred from homology"/>
<comment type="function">
    <text evidence="1">Catalyzes the base-exchange of a guanine (G) residue with the queuine precursor 7-aminomethyl-7-deazaguanine (PreQ1) at position 34 (anticodon wobble position) in tRNAs with GU(N) anticodons (tRNA-Asp, -Asn, -His and -Tyr). Catalysis occurs through a double-displacement mechanism. The nucleophile active site attacks the C1' of nucleotide 34 to detach the guanine base from the RNA, forming a covalent enzyme-RNA intermediate. The proton acceptor active site deprotonates the incoming PreQ1, allowing a nucleophilic attack on the C1' of the ribose to form the product. After dissociation, two additional enzymatic reactions on the tRNA convert PreQ1 to queuine (Q), resulting in the hypermodified nucleoside queuosine (7-(((4,5-cis-dihydroxy-2-cyclopenten-1-yl)amino)methyl)-7-deazaguanosine).</text>
</comment>
<comment type="catalytic activity">
    <reaction evidence="1">
        <text>7-aminomethyl-7-carbaguanine + guanosine(34) in tRNA = 7-aminomethyl-7-carbaguanosine(34) in tRNA + guanine</text>
        <dbReference type="Rhea" id="RHEA:24104"/>
        <dbReference type="Rhea" id="RHEA-COMP:10341"/>
        <dbReference type="Rhea" id="RHEA-COMP:10342"/>
        <dbReference type="ChEBI" id="CHEBI:16235"/>
        <dbReference type="ChEBI" id="CHEBI:58703"/>
        <dbReference type="ChEBI" id="CHEBI:74269"/>
        <dbReference type="ChEBI" id="CHEBI:82833"/>
        <dbReference type="EC" id="2.4.2.29"/>
    </reaction>
</comment>
<comment type="cofactor">
    <cofactor evidence="1">
        <name>Zn(2+)</name>
        <dbReference type="ChEBI" id="CHEBI:29105"/>
    </cofactor>
    <text evidence="1">Binds 1 zinc ion per subunit.</text>
</comment>
<comment type="pathway">
    <text evidence="1">tRNA modification; tRNA-queuosine biosynthesis.</text>
</comment>
<comment type="subunit">
    <text evidence="1">Homodimer. Within each dimer, one monomer is responsible for RNA recognition and catalysis, while the other monomer binds to the replacement base PreQ1.</text>
</comment>
<comment type="similarity">
    <text evidence="1">Belongs to the queuine tRNA-ribosyltransferase family.</text>
</comment>
<reference key="1">
    <citation type="journal article" date="2007" name="J. Bacteriol.">
        <title>Genome sequence of Avery's virulent serotype 2 strain D39 of Streptococcus pneumoniae and comparison with that of unencapsulated laboratory strain R6.</title>
        <authorList>
            <person name="Lanie J.A."/>
            <person name="Ng W.-L."/>
            <person name="Kazmierczak K.M."/>
            <person name="Andrzejewski T.M."/>
            <person name="Davidsen T.M."/>
            <person name="Wayne K.J."/>
            <person name="Tettelin H."/>
            <person name="Glass J.I."/>
            <person name="Winkler M.E."/>
        </authorList>
    </citation>
    <scope>NUCLEOTIDE SEQUENCE [LARGE SCALE GENOMIC DNA]</scope>
    <source>
        <strain>D39 / NCTC 7466</strain>
    </source>
</reference>
<organism>
    <name type="scientific">Streptococcus pneumoniae serotype 2 (strain D39 / NCTC 7466)</name>
    <dbReference type="NCBI Taxonomy" id="373153"/>
    <lineage>
        <taxon>Bacteria</taxon>
        <taxon>Bacillati</taxon>
        <taxon>Bacillota</taxon>
        <taxon>Bacilli</taxon>
        <taxon>Lactobacillales</taxon>
        <taxon>Streptococcaceae</taxon>
        <taxon>Streptococcus</taxon>
    </lineage>
</organism>
<feature type="chain" id="PRO_1000016867" description="Queuine tRNA-ribosyltransferase">
    <location>
        <begin position="1"/>
        <end position="380"/>
    </location>
</feature>
<feature type="region of interest" description="RNA binding" evidence="1">
    <location>
        <begin position="251"/>
        <end position="257"/>
    </location>
</feature>
<feature type="region of interest" description="RNA binding; important for wobble base 34 recognition" evidence="1">
    <location>
        <begin position="275"/>
        <end position="279"/>
    </location>
</feature>
<feature type="active site" description="Proton acceptor" evidence="1">
    <location>
        <position position="96"/>
    </location>
</feature>
<feature type="active site" description="Nucleophile" evidence="1">
    <location>
        <position position="270"/>
    </location>
</feature>
<feature type="binding site" evidence="1">
    <location>
        <begin position="96"/>
        <end position="100"/>
    </location>
    <ligand>
        <name>substrate</name>
    </ligand>
</feature>
<feature type="binding site" evidence="1">
    <location>
        <position position="150"/>
    </location>
    <ligand>
        <name>substrate</name>
    </ligand>
</feature>
<feature type="binding site" evidence="1">
    <location>
        <position position="193"/>
    </location>
    <ligand>
        <name>substrate</name>
    </ligand>
</feature>
<feature type="binding site" evidence="1">
    <location>
        <position position="220"/>
    </location>
    <ligand>
        <name>substrate</name>
    </ligand>
</feature>
<feature type="binding site" evidence="1">
    <location>
        <position position="308"/>
    </location>
    <ligand>
        <name>Zn(2+)</name>
        <dbReference type="ChEBI" id="CHEBI:29105"/>
    </ligand>
</feature>
<feature type="binding site" evidence="1">
    <location>
        <position position="310"/>
    </location>
    <ligand>
        <name>Zn(2+)</name>
        <dbReference type="ChEBI" id="CHEBI:29105"/>
    </ligand>
</feature>
<feature type="binding site" evidence="1">
    <location>
        <position position="313"/>
    </location>
    <ligand>
        <name>Zn(2+)</name>
        <dbReference type="ChEBI" id="CHEBI:29105"/>
    </ligand>
</feature>
<feature type="binding site" evidence="1">
    <location>
        <position position="339"/>
    </location>
    <ligand>
        <name>Zn(2+)</name>
        <dbReference type="ChEBI" id="CHEBI:29105"/>
    </ligand>
</feature>
<protein>
    <recommendedName>
        <fullName evidence="1">Queuine tRNA-ribosyltransferase</fullName>
        <ecNumber evidence="1">2.4.2.29</ecNumber>
    </recommendedName>
    <alternativeName>
        <fullName evidence="1">Guanine insertion enzyme</fullName>
    </alternativeName>
    <alternativeName>
        <fullName evidence="1">tRNA-guanine transglycosylase</fullName>
    </alternativeName>
</protein>
<keyword id="KW-0328">Glycosyltransferase</keyword>
<keyword id="KW-0479">Metal-binding</keyword>
<keyword id="KW-0671">Queuosine biosynthesis</keyword>
<keyword id="KW-1185">Reference proteome</keyword>
<keyword id="KW-0808">Transferase</keyword>
<keyword id="KW-0819">tRNA processing</keyword>
<keyword id="KW-0862">Zinc</keyword>
<name>TGT_STRP2</name>
<sequence length="380" mass="43121">MSDSPIKYRLIKKEKHTGARLGEIITPHGTFPTPMFMPVGTQATVKTQSPEELKEMGSGIILSNTYHLWLRPGDELIARAGGLHKFMNWDQPILTDSGGFQVYSLADSRNITEEGVTFKNHLNGSKMFLSPEKAISIQNNLGSDIMMSFDECPQFYQPYDYVKKSIERTSRWAERGLKAHRRPHDQGLFGIVQGAGFEDLRRQSAHDLVSMDFSGYSIGGLAVGETHEEMNAVLDFTTQLLPENKPRYLMGVGAPDSLIDGVIRGVDMFDCVLPTRIARNGTCMTSQGRLVVKNAQFAEDFTPLDPECDCYTCNNYTRAYLRHLLKADETFGIRLTSYHNLYFLLNLMKQVRQAIMDDNLLEFREYFVEKYGYNKSGRNF</sequence>
<evidence type="ECO:0000255" key="1">
    <source>
        <dbReference type="HAMAP-Rule" id="MF_00168"/>
    </source>
</evidence>
<dbReference type="EC" id="2.4.2.29" evidence="1"/>
<dbReference type="EMBL" id="CP000410">
    <property type="protein sequence ID" value="ABJ53811.1"/>
    <property type="molecule type" value="Genomic_DNA"/>
</dbReference>
<dbReference type="RefSeq" id="WP_001285241.1">
    <property type="nucleotide sequence ID" value="NZ_JAMLJR010000015.1"/>
</dbReference>
<dbReference type="SMR" id="Q04IB3"/>
<dbReference type="PaxDb" id="373153-SPD_1868"/>
<dbReference type="KEGG" id="spd:SPD_1868"/>
<dbReference type="eggNOG" id="COG0343">
    <property type="taxonomic scope" value="Bacteria"/>
</dbReference>
<dbReference type="HOGENOM" id="CLU_022060_0_1_9"/>
<dbReference type="BioCyc" id="SPNE373153:G1G6V-2012-MONOMER"/>
<dbReference type="UniPathway" id="UPA00392"/>
<dbReference type="Proteomes" id="UP000001452">
    <property type="component" value="Chromosome"/>
</dbReference>
<dbReference type="GO" id="GO:0005829">
    <property type="term" value="C:cytosol"/>
    <property type="evidence" value="ECO:0007669"/>
    <property type="project" value="TreeGrafter"/>
</dbReference>
<dbReference type="GO" id="GO:0046872">
    <property type="term" value="F:metal ion binding"/>
    <property type="evidence" value="ECO:0007669"/>
    <property type="project" value="UniProtKB-KW"/>
</dbReference>
<dbReference type="GO" id="GO:0008479">
    <property type="term" value="F:tRNA-guanosine(34) queuine transglycosylase activity"/>
    <property type="evidence" value="ECO:0007669"/>
    <property type="project" value="UniProtKB-UniRule"/>
</dbReference>
<dbReference type="GO" id="GO:0008616">
    <property type="term" value="P:queuosine biosynthetic process"/>
    <property type="evidence" value="ECO:0007669"/>
    <property type="project" value="UniProtKB-UniRule"/>
</dbReference>
<dbReference type="GO" id="GO:0002099">
    <property type="term" value="P:tRNA wobble guanine modification"/>
    <property type="evidence" value="ECO:0007669"/>
    <property type="project" value="TreeGrafter"/>
</dbReference>
<dbReference type="GO" id="GO:0101030">
    <property type="term" value="P:tRNA-guanine transglycosylation"/>
    <property type="evidence" value="ECO:0007669"/>
    <property type="project" value="InterPro"/>
</dbReference>
<dbReference type="FunFam" id="3.20.20.105:FF:000001">
    <property type="entry name" value="Queuine tRNA-ribosyltransferase"/>
    <property type="match status" value="1"/>
</dbReference>
<dbReference type="Gene3D" id="3.20.20.105">
    <property type="entry name" value="Queuine tRNA-ribosyltransferase-like"/>
    <property type="match status" value="1"/>
</dbReference>
<dbReference type="HAMAP" id="MF_00168">
    <property type="entry name" value="Q_tRNA_Tgt"/>
    <property type="match status" value="1"/>
</dbReference>
<dbReference type="InterPro" id="IPR050076">
    <property type="entry name" value="ArchSynthase1/Queuine_TRR"/>
</dbReference>
<dbReference type="InterPro" id="IPR004803">
    <property type="entry name" value="TGT"/>
</dbReference>
<dbReference type="InterPro" id="IPR036511">
    <property type="entry name" value="TGT-like_sf"/>
</dbReference>
<dbReference type="InterPro" id="IPR002616">
    <property type="entry name" value="tRNA_ribo_trans-like"/>
</dbReference>
<dbReference type="NCBIfam" id="TIGR00430">
    <property type="entry name" value="Q_tRNA_tgt"/>
    <property type="match status" value="1"/>
</dbReference>
<dbReference type="NCBIfam" id="TIGR00449">
    <property type="entry name" value="tgt_general"/>
    <property type="match status" value="1"/>
</dbReference>
<dbReference type="PANTHER" id="PTHR46499">
    <property type="entry name" value="QUEUINE TRNA-RIBOSYLTRANSFERASE"/>
    <property type="match status" value="1"/>
</dbReference>
<dbReference type="PANTHER" id="PTHR46499:SF1">
    <property type="entry name" value="QUEUINE TRNA-RIBOSYLTRANSFERASE"/>
    <property type="match status" value="1"/>
</dbReference>
<dbReference type="Pfam" id="PF01702">
    <property type="entry name" value="TGT"/>
    <property type="match status" value="1"/>
</dbReference>
<dbReference type="SUPFAM" id="SSF51713">
    <property type="entry name" value="tRNA-guanine transglycosylase"/>
    <property type="match status" value="1"/>
</dbReference>